<sequence>MTWVLASSSPRRKELLAQAGFTQAQFQFVQVSPDIDESQLALETPSAYVTRLALEKAQAGLALSRHLPHPKVIGSDTIVVLDGQLLGKPTDPQDAERMLTSLSGRTHTVMTAVAITNGKRALSRLCQTQVSFTSLSQQDIAKYVATGEPMDKAGAYGIQGLGGCFVSEISGSYSSVVGLPLVETRALLAAMMEQDDTL</sequence>
<reference key="1">
    <citation type="submission" date="2006-03" db="EMBL/GenBank/DDBJ databases">
        <title>Complete sequence of Shewanella denitrificans OS217.</title>
        <authorList>
            <consortium name="US DOE Joint Genome Institute"/>
            <person name="Copeland A."/>
            <person name="Lucas S."/>
            <person name="Lapidus A."/>
            <person name="Barry K."/>
            <person name="Detter J.C."/>
            <person name="Glavina del Rio T."/>
            <person name="Hammon N."/>
            <person name="Israni S."/>
            <person name="Dalin E."/>
            <person name="Tice H."/>
            <person name="Pitluck S."/>
            <person name="Brettin T."/>
            <person name="Bruce D."/>
            <person name="Han C."/>
            <person name="Tapia R."/>
            <person name="Gilna P."/>
            <person name="Kiss H."/>
            <person name="Schmutz J."/>
            <person name="Larimer F."/>
            <person name="Land M."/>
            <person name="Hauser L."/>
            <person name="Kyrpides N."/>
            <person name="Lykidis A."/>
            <person name="Richardson P."/>
        </authorList>
    </citation>
    <scope>NUCLEOTIDE SEQUENCE [LARGE SCALE GENOMIC DNA]</scope>
    <source>
        <strain>OS217 / ATCC BAA-1090 / DSM 15013</strain>
    </source>
</reference>
<dbReference type="EC" id="3.6.1.9" evidence="1"/>
<dbReference type="EMBL" id="CP000302">
    <property type="protein sequence ID" value="ABE56607.1"/>
    <property type="molecule type" value="Genomic_DNA"/>
</dbReference>
<dbReference type="RefSeq" id="WP_011497750.1">
    <property type="nucleotide sequence ID" value="NC_007954.1"/>
</dbReference>
<dbReference type="SMR" id="Q12IW9"/>
<dbReference type="STRING" id="318161.Sden_3331"/>
<dbReference type="KEGG" id="sdn:Sden_3331"/>
<dbReference type="eggNOG" id="COG0424">
    <property type="taxonomic scope" value="Bacteria"/>
</dbReference>
<dbReference type="HOGENOM" id="CLU_040416_2_1_6"/>
<dbReference type="OrthoDB" id="9807767at2"/>
<dbReference type="Proteomes" id="UP000001982">
    <property type="component" value="Chromosome"/>
</dbReference>
<dbReference type="GO" id="GO:0005737">
    <property type="term" value="C:cytoplasm"/>
    <property type="evidence" value="ECO:0007669"/>
    <property type="project" value="UniProtKB-SubCell"/>
</dbReference>
<dbReference type="GO" id="GO:0036218">
    <property type="term" value="F:dTTP diphosphatase activity"/>
    <property type="evidence" value="ECO:0007669"/>
    <property type="project" value="RHEA"/>
</dbReference>
<dbReference type="GO" id="GO:0036221">
    <property type="term" value="F:UTP diphosphatase activity"/>
    <property type="evidence" value="ECO:0007669"/>
    <property type="project" value="RHEA"/>
</dbReference>
<dbReference type="GO" id="GO:0009117">
    <property type="term" value="P:nucleotide metabolic process"/>
    <property type="evidence" value="ECO:0007669"/>
    <property type="project" value="UniProtKB-KW"/>
</dbReference>
<dbReference type="CDD" id="cd00555">
    <property type="entry name" value="Maf"/>
    <property type="match status" value="1"/>
</dbReference>
<dbReference type="Gene3D" id="3.90.950.10">
    <property type="match status" value="1"/>
</dbReference>
<dbReference type="HAMAP" id="MF_00528">
    <property type="entry name" value="Maf"/>
    <property type="match status" value="1"/>
</dbReference>
<dbReference type="InterPro" id="IPR029001">
    <property type="entry name" value="ITPase-like_fam"/>
</dbReference>
<dbReference type="InterPro" id="IPR003697">
    <property type="entry name" value="Maf-like"/>
</dbReference>
<dbReference type="NCBIfam" id="TIGR00172">
    <property type="entry name" value="maf"/>
    <property type="match status" value="1"/>
</dbReference>
<dbReference type="PANTHER" id="PTHR43213">
    <property type="entry name" value="BIFUNCTIONAL DTTP/UTP PYROPHOSPHATASE/METHYLTRANSFERASE PROTEIN-RELATED"/>
    <property type="match status" value="1"/>
</dbReference>
<dbReference type="PANTHER" id="PTHR43213:SF5">
    <property type="entry name" value="BIFUNCTIONAL DTTP_UTP PYROPHOSPHATASE_METHYLTRANSFERASE PROTEIN-RELATED"/>
    <property type="match status" value="1"/>
</dbReference>
<dbReference type="Pfam" id="PF02545">
    <property type="entry name" value="Maf"/>
    <property type="match status" value="1"/>
</dbReference>
<dbReference type="PIRSF" id="PIRSF006305">
    <property type="entry name" value="Maf"/>
    <property type="match status" value="1"/>
</dbReference>
<dbReference type="SUPFAM" id="SSF52972">
    <property type="entry name" value="ITPase-like"/>
    <property type="match status" value="1"/>
</dbReference>
<comment type="function">
    <text evidence="1">Nucleoside triphosphate pyrophosphatase that hydrolyzes dTTP and UTP. May have a dual role in cell division arrest and in preventing the incorporation of modified nucleotides into cellular nucleic acids.</text>
</comment>
<comment type="catalytic activity">
    <reaction evidence="1">
        <text>dTTP + H2O = dTMP + diphosphate + H(+)</text>
        <dbReference type="Rhea" id="RHEA:28534"/>
        <dbReference type="ChEBI" id="CHEBI:15377"/>
        <dbReference type="ChEBI" id="CHEBI:15378"/>
        <dbReference type="ChEBI" id="CHEBI:33019"/>
        <dbReference type="ChEBI" id="CHEBI:37568"/>
        <dbReference type="ChEBI" id="CHEBI:63528"/>
        <dbReference type="EC" id="3.6.1.9"/>
    </reaction>
</comment>
<comment type="catalytic activity">
    <reaction evidence="1">
        <text>UTP + H2O = UMP + diphosphate + H(+)</text>
        <dbReference type="Rhea" id="RHEA:29395"/>
        <dbReference type="ChEBI" id="CHEBI:15377"/>
        <dbReference type="ChEBI" id="CHEBI:15378"/>
        <dbReference type="ChEBI" id="CHEBI:33019"/>
        <dbReference type="ChEBI" id="CHEBI:46398"/>
        <dbReference type="ChEBI" id="CHEBI:57865"/>
        <dbReference type="EC" id="3.6.1.9"/>
    </reaction>
</comment>
<comment type="cofactor">
    <cofactor evidence="1">
        <name>a divalent metal cation</name>
        <dbReference type="ChEBI" id="CHEBI:60240"/>
    </cofactor>
</comment>
<comment type="subcellular location">
    <subcellularLocation>
        <location evidence="1">Cytoplasm</location>
    </subcellularLocation>
</comment>
<comment type="similarity">
    <text evidence="1">Belongs to the Maf family. YhdE subfamily.</text>
</comment>
<gene>
    <name type="ordered locus">Sden_3331</name>
</gene>
<protein>
    <recommendedName>
        <fullName evidence="1">dTTP/UTP pyrophosphatase</fullName>
        <shortName evidence="1">dTTPase/UTPase</shortName>
        <ecNumber evidence="1">3.6.1.9</ecNumber>
    </recommendedName>
    <alternativeName>
        <fullName evidence="1">Nucleoside triphosphate pyrophosphatase</fullName>
    </alternativeName>
    <alternativeName>
        <fullName evidence="1">Nucleotide pyrophosphatase</fullName>
        <shortName evidence="1">Nucleotide PPase</shortName>
    </alternativeName>
</protein>
<keyword id="KW-0963">Cytoplasm</keyword>
<keyword id="KW-0378">Hydrolase</keyword>
<keyword id="KW-0546">Nucleotide metabolism</keyword>
<keyword id="KW-1185">Reference proteome</keyword>
<organism>
    <name type="scientific">Shewanella denitrificans (strain OS217 / ATCC BAA-1090 / DSM 15013)</name>
    <dbReference type="NCBI Taxonomy" id="318161"/>
    <lineage>
        <taxon>Bacteria</taxon>
        <taxon>Pseudomonadati</taxon>
        <taxon>Pseudomonadota</taxon>
        <taxon>Gammaproteobacteria</taxon>
        <taxon>Alteromonadales</taxon>
        <taxon>Shewanellaceae</taxon>
        <taxon>Shewanella</taxon>
    </lineage>
</organism>
<feature type="chain" id="PRO_0000267424" description="dTTP/UTP pyrophosphatase">
    <location>
        <begin position="1"/>
        <end position="198"/>
    </location>
</feature>
<feature type="active site" description="Proton acceptor" evidence="1">
    <location>
        <position position="76"/>
    </location>
</feature>
<feature type="site" description="Important for substrate specificity" evidence="1">
    <location>
        <position position="11"/>
    </location>
</feature>
<feature type="site" description="Important for substrate specificity" evidence="1">
    <location>
        <position position="77"/>
    </location>
</feature>
<feature type="site" description="Important for substrate specificity" evidence="1">
    <location>
        <position position="159"/>
    </location>
</feature>
<proteinExistence type="inferred from homology"/>
<evidence type="ECO:0000255" key="1">
    <source>
        <dbReference type="HAMAP-Rule" id="MF_00528"/>
    </source>
</evidence>
<accession>Q12IW9</accession>
<name>NTPPA_SHEDO</name>